<keyword id="KW-0002">3D-structure</keyword>
<keyword id="KW-0007">Acetylation</keyword>
<keyword id="KW-0025">Alternative splicing</keyword>
<keyword id="KW-0963">Cytoplasm</keyword>
<keyword id="KW-0507">mRNA processing</keyword>
<keyword id="KW-0508">mRNA splicing</keyword>
<keyword id="KW-0539">Nucleus</keyword>
<keyword id="KW-0597">Phosphoprotein</keyword>
<keyword id="KW-1267">Proteomics identification</keyword>
<keyword id="KW-1185">Reference proteome</keyword>
<keyword id="KW-0747">Spliceosome</keyword>
<comment type="function">
    <text evidence="5 6">Protein associated with the U5 snRNP, during its maturation and its post-splicing recycling and which is required for spliceosomal tri-snRNP complex assembly in the nucleus (PubMed:34131137, PubMed:35188580). Has a molecular sequestering activity and transiently hinders SNRNP200 binding sites for constitutive splicing factors that intervene later during the assembly of the spliceosome and splicing (PubMed:35188580). Together with its molecular sequestering activity, may also function as a molecular adapter and placeholder, coordinating the assembly of the U5 snRNP and its association with the U4/U6 di-snRNP (PubMed:34131137).</text>
</comment>
<comment type="subunit">
    <text evidence="5 6">Interacts in a RNA-independent manner with distinct U5 snRNP-containing complexes, the mono-U5 snRNP and the post-splicing U5 snRNP-PRPF19 complex (PubMed:34131137). Interacts with SNRNP200; the interaction is direct, excludes recruitment of C9ORF78 and WBP4 to SNRNP200 and negatively regulates its RNA helicase activity (PubMed:35188580). Interacts with PRPF8; the interaction is direct (PubMed:35188580).</text>
</comment>
<comment type="interaction">
    <interactant intactId="EBI-717229">
        <id>Q9Y5U2</id>
    </interactant>
    <interactant intactId="EBI-742887">
        <id>Q8TAP6</id>
        <label>CEP76</label>
    </interactant>
    <organismsDiffer>false</organismsDiffer>
    <experiments>3</experiments>
</comment>
<comment type="interaction">
    <interactant intactId="EBI-717229">
        <id>Q9Y5U2</id>
    </interactant>
    <interactant intactId="EBI-10172181">
        <id>Q53SE7</id>
        <label>FLJ13057</label>
    </interactant>
    <organismsDiffer>false</organismsDiffer>
    <experiments>3</experiments>
</comment>
<comment type="interaction">
    <interactant intactId="EBI-717229">
        <id>Q9Y5U2</id>
    </interactant>
    <interactant intactId="EBI-618309">
        <id>Q08379</id>
        <label>GOLGA2</label>
    </interactant>
    <organismsDiffer>false</organismsDiffer>
    <experiments>3</experiments>
</comment>
<comment type="interaction">
    <interactant intactId="EBI-717229">
        <id>Q9Y5U2</id>
    </interactant>
    <interactant intactId="EBI-747754">
        <id>P28799</id>
        <label>GRN</label>
    </interactant>
    <organismsDiffer>false</organismsDiffer>
    <experiments>3</experiments>
</comment>
<comment type="interaction">
    <interactant intactId="EBI-717229">
        <id>Q9Y5U2</id>
    </interactant>
    <interactant intactId="EBI-358297">
        <id>O00505</id>
        <label>KPNA3</label>
    </interactant>
    <organismsDiffer>false</organismsDiffer>
    <experiments>4</experiments>
</comment>
<comment type="interaction">
    <interactant intactId="EBI-717229">
        <id>Q9Y5U2</id>
    </interactant>
    <interactant intactId="EBI-307352">
        <id>Q04864</id>
        <label>REL</label>
    </interactant>
    <organismsDiffer>false</organismsDiffer>
    <experiments>3</experiments>
</comment>
<comment type="interaction">
    <interactant intactId="EBI-717229">
        <id>Q9Y5U2</id>
    </interactant>
    <interactant intactId="EBI-10225152">
        <id>Q96EP0-3</id>
        <label>RNF31</label>
    </interactant>
    <organismsDiffer>false</organismsDiffer>
    <experiments>3</experiments>
</comment>
<comment type="interaction">
    <interactant intactId="EBI-717229">
        <id>Q9Y5U2</id>
    </interactant>
    <interactant intactId="EBI-750109">
        <id>Q9NYB0</id>
        <label>TERF2IP</label>
    </interactant>
    <organismsDiffer>false</organismsDiffer>
    <experiments>2</experiments>
</comment>
<comment type="interaction">
    <interactant intactId="EBI-717229">
        <id>Q9Y5U2</id>
    </interactant>
    <interactant intactId="EBI-359224">
        <id>Q13077</id>
        <label>TRAF1</label>
    </interactant>
    <organismsDiffer>false</organismsDiffer>
    <experiments>3</experiments>
</comment>
<comment type="interaction">
    <interactant intactId="EBI-717229">
        <id>Q9Y5U2</id>
    </interactant>
    <interactant intactId="EBI-355744">
        <id>Q12933</id>
        <label>TRAF2</label>
    </interactant>
    <organismsDiffer>false</organismsDiffer>
    <experiments>3</experiments>
</comment>
<comment type="interaction">
    <interactant intactId="EBI-717229">
        <id>Q9Y5U2</id>
    </interactant>
    <interactant intactId="EBI-720609">
        <id>O76024</id>
        <label>WFS1</label>
    </interactant>
    <organismsDiffer>false</organismsDiffer>
    <experiments>3</experiments>
</comment>
<comment type="subcellular location">
    <subcellularLocation>
        <location evidence="5">Nucleus</location>
    </subcellularLocation>
    <subcellularLocation>
        <location evidence="5">Cytoplasm</location>
    </subcellularLocation>
    <text evidence="5">Shuttles between the cytoplasm and the nucleus, associated with the U5 snRNP.</text>
</comment>
<comment type="alternative products">
    <event type="alternative splicing"/>
    <isoform>
        <id>Q9Y5U2-1</id>
        <name>1</name>
        <sequence type="displayed"/>
    </isoform>
    <isoform>
        <id>Q9Y5U2-2</id>
        <name>2</name>
        <sequence type="described" ref="VSP_016561"/>
    </isoform>
</comment>
<comment type="tissue specificity">
    <text evidence="3">Expressed in fetal brain, lung, liver and kidney. Widely expressed in adult tissues.</text>
</comment>
<comment type="similarity">
    <text evidence="9">Belongs to the TSSC4 family.</text>
</comment>
<feature type="chain" id="PRO_0000076360" description="U5 small nuclear ribonucleoprotein TSSC4">
    <location>
        <begin position="1"/>
        <end position="329"/>
    </location>
</feature>
<feature type="region of interest" description="Disordered" evidence="2">
    <location>
        <begin position="1"/>
        <end position="88"/>
    </location>
</feature>
<feature type="region of interest" description="Hom2; mediates interaction with the U5 snRNP complexes and required for spliceosomal tri-snRNP complex assembly" evidence="5">
    <location>
        <begin position="77"/>
        <end position="104"/>
    </location>
</feature>
<feature type="region of interest" description="Disordered" evidence="2">
    <location>
        <begin position="104"/>
        <end position="156"/>
    </location>
</feature>
<feature type="region of interest" description="Interaction with SNRNP200" evidence="6">
    <location>
        <begin position="149"/>
        <end position="316"/>
    </location>
</feature>
<feature type="region of interest" description="Hom3; mediates interaction with the U5 snRNP complexes" evidence="5">
    <location>
        <begin position="150"/>
        <end position="186"/>
    </location>
</feature>
<feature type="region of interest" description="Hom4; necessary for interaction with the PRPF19 complex and required for spliceosomal tri-snRNP complex assembly" evidence="5">
    <location>
        <begin position="201"/>
        <end position="250"/>
    </location>
</feature>
<feature type="region of interest" description="Disordered" evidence="2">
    <location>
        <begin position="221"/>
        <end position="329"/>
    </location>
</feature>
<feature type="compositionally biased region" description="Low complexity" evidence="2">
    <location>
        <begin position="22"/>
        <end position="41"/>
    </location>
</feature>
<feature type="compositionally biased region" description="Basic residues" evidence="2">
    <location>
        <begin position="306"/>
        <end position="317"/>
    </location>
</feature>
<feature type="modified residue" description="Phosphoserine" evidence="1">
    <location>
        <position position="60"/>
    </location>
</feature>
<feature type="modified residue" description="Phosphoserine" evidence="1">
    <location>
        <position position="67"/>
    </location>
</feature>
<feature type="modified residue" description="Phosphoserine" evidence="18">
    <location>
        <position position="86"/>
    </location>
</feature>
<feature type="modified residue" description="Phosphoserine" evidence="18">
    <location>
        <position position="132"/>
    </location>
</feature>
<feature type="modified residue" description="Phosphoserine" evidence="14 17">
    <location>
        <position position="143"/>
    </location>
</feature>
<feature type="modified residue" description="Phosphoserine" evidence="14 17 18">
    <location>
        <position position="146"/>
    </location>
</feature>
<feature type="modified residue" description="N6-acetyllysine" evidence="15">
    <location>
        <position position="217"/>
    </location>
</feature>
<feature type="modified residue" description="Phosphoserine" evidence="19">
    <location>
        <position position="265"/>
    </location>
</feature>
<feature type="modified residue" description="Phosphoserine" evidence="16">
    <location>
        <position position="321"/>
    </location>
</feature>
<feature type="splice variant" id="VSP_016561" description="In isoform 2." evidence="8">
    <location>
        <begin position="8"/>
        <end position="71"/>
    </location>
</feature>
<feature type="sequence variant" id="VAR_057826" description="In dbSNP:rs2234278.">
    <original>H</original>
    <variation>P</variation>
    <location>
        <position position="17"/>
    </location>
</feature>
<feature type="sequence variant" id="VAR_060194" description="In dbSNP:rs1008265.">
    <original>R</original>
    <variation>Q</variation>
    <location>
        <position position="124"/>
    </location>
</feature>
<feature type="sequence variant" id="VAR_057827" description="In dbSNP:rs2234280.">
    <original>R</original>
    <variation>S</variation>
    <location>
        <position position="230"/>
    </location>
</feature>
<feature type="sequence variant" id="VAR_057828" description="In dbSNP:rs2234281.">
    <original>G</original>
    <variation>R</variation>
    <location>
        <position position="262"/>
    </location>
</feature>
<feature type="sequence variant" id="VAR_063128" description="In dbSNP:rs2234283." evidence="3 4">
    <original>H</original>
    <variation>P</variation>
    <location>
        <position position="274"/>
    </location>
</feature>
<feature type="mutagenesis site" description="Loss of interaction with PRPF8 and SNRNP200; when associated with A-165, A-201, A-202, A-315 and A-316." evidence="6">
    <original>W</original>
    <variation>A</variation>
    <location>
        <position position="162"/>
    </location>
</feature>
<feature type="mutagenesis site" description="Loss of interaction with PRPF8 and SNRNP200; when associated with A-162, A-201, A-202, A-315 and A-316." evidence="6">
    <original>Y</original>
    <variation>A</variation>
    <location>
        <position position="165"/>
    </location>
</feature>
<feature type="mutagenesis site" description="Loss of interaction with SNRNP200; when associated with A-202, A-315 and A-316. Loss of interaction with PRPF8 and SNRNP200; when associated with A-162, A-165, A-202, A-315 and A-316." evidence="6">
    <original>F</original>
    <variation>A</variation>
    <location>
        <position position="201"/>
    </location>
</feature>
<feature type="mutagenesis site" description="Loss of interaction with SNRNP200; when associated with A-201, A-315 and A-316. Loss of interaction with PRPF8 and SNRNP200; when associated with A-162, A-165, A-201, A-315 and A-316." evidence="6">
    <original>N</original>
    <variation>A</variation>
    <location>
        <position position="202"/>
    </location>
</feature>
<feature type="mutagenesis site" description="Loss of interaction with SNRNP200; when associated with A-201, A-202 and A-316. Loss of interaction with PRPF8 and SNRNP200; when associated with A-162, A-165, A-201, A-202 and A-316." evidence="6">
    <original>F</original>
    <variation>A</variation>
    <location>
        <position position="315"/>
    </location>
</feature>
<feature type="mutagenesis site" description="Loss of interaction with SNRNP200; when associated with A-201, A-202 and A-315. Loss of interaction with PRPF8 and SNRNP200; when associated with A-162, A-165, A-201, A-202 and A-315." evidence="6">
    <original>R</original>
    <variation>A</variation>
    <location>
        <position position="316"/>
    </location>
</feature>
<feature type="sequence conflict" description="In Ref. 1; AAD23579." evidence="9" ref="1">
    <original>L</original>
    <variation>F</variation>
    <location>
        <position position="72"/>
    </location>
</feature>
<feature type="helix" evidence="21">
    <location>
        <begin position="87"/>
        <end position="96"/>
    </location>
</feature>
<feature type="helix" evidence="20">
    <location>
        <begin position="154"/>
        <end position="157"/>
    </location>
</feature>
<feature type="turn" evidence="20">
    <location>
        <begin position="159"/>
        <end position="161"/>
    </location>
</feature>
<feature type="strand" evidence="20">
    <location>
        <begin position="162"/>
        <end position="165"/>
    </location>
</feature>
<feature type="turn" evidence="20">
    <location>
        <begin position="258"/>
        <end position="261"/>
    </location>
</feature>
<feature type="strand" evidence="20">
    <location>
        <begin position="313"/>
        <end position="315"/>
    </location>
</feature>
<organism>
    <name type="scientific">Homo sapiens</name>
    <name type="common">Human</name>
    <dbReference type="NCBI Taxonomy" id="9606"/>
    <lineage>
        <taxon>Eukaryota</taxon>
        <taxon>Metazoa</taxon>
        <taxon>Chordata</taxon>
        <taxon>Craniata</taxon>
        <taxon>Vertebrata</taxon>
        <taxon>Euteleostomi</taxon>
        <taxon>Mammalia</taxon>
        <taxon>Eutheria</taxon>
        <taxon>Euarchontoglires</taxon>
        <taxon>Primates</taxon>
        <taxon>Haplorrhini</taxon>
        <taxon>Catarrhini</taxon>
        <taxon>Hominidae</taxon>
        <taxon>Homo</taxon>
    </lineage>
</organism>
<gene>
    <name evidence="12" type="primary">TSSC4</name>
</gene>
<protein>
    <recommendedName>
        <fullName evidence="10 11">U5 small nuclear ribonucleoprotein TSSC4</fullName>
    </recommendedName>
    <alternativeName>
        <fullName evidence="7">Tumor-suppressing STF cDNA 4 protein</fullName>
    </alternativeName>
    <alternativeName>
        <fullName evidence="7">Tumor-suppressing subchromosomal transferable fragment candidate gene 4 protein</fullName>
    </alternativeName>
</protein>
<dbReference type="EMBL" id="AF125568">
    <property type="protein sequence ID" value="AAD23579.1"/>
    <property type="molecule type" value="mRNA"/>
</dbReference>
<dbReference type="EMBL" id="AC124057">
    <property type="status" value="NOT_ANNOTATED_CDS"/>
    <property type="molecule type" value="Genomic_DNA"/>
</dbReference>
<dbReference type="EMBL" id="BC006091">
    <property type="protein sequence ID" value="AAH06091.1"/>
    <property type="molecule type" value="mRNA"/>
</dbReference>
<dbReference type="EMBL" id="BC050616">
    <property type="protein sequence ID" value="AAH50616.1"/>
    <property type="molecule type" value="mRNA"/>
</dbReference>
<dbReference type="CCDS" id="CCDS73241.1">
    <molecule id="Q9Y5U2-2"/>
</dbReference>
<dbReference type="CCDS" id="CCDS7735.1">
    <molecule id="Q9Y5U2-1"/>
</dbReference>
<dbReference type="RefSeq" id="NP_001284587.1">
    <molecule id="Q9Y5U2-1"/>
    <property type="nucleotide sequence ID" value="NM_001297658.2"/>
</dbReference>
<dbReference type="RefSeq" id="NP_001284588.1">
    <molecule id="Q9Y5U2-1"/>
    <property type="nucleotide sequence ID" value="NM_001297659.2"/>
</dbReference>
<dbReference type="RefSeq" id="NP_001284589.1">
    <molecule id="Q9Y5U2-1"/>
    <property type="nucleotide sequence ID" value="NM_001297660.2"/>
</dbReference>
<dbReference type="RefSeq" id="NP_001284590.1">
    <molecule id="Q9Y5U2-2"/>
    <property type="nucleotide sequence ID" value="NM_001297661.2"/>
</dbReference>
<dbReference type="RefSeq" id="NP_005697.2">
    <molecule id="Q9Y5U2-1"/>
    <property type="nucleotide sequence ID" value="NM_005706.3"/>
</dbReference>
<dbReference type="RefSeq" id="XP_006718181.1">
    <molecule id="Q9Y5U2-1"/>
    <property type="nucleotide sequence ID" value="XM_006718118.3"/>
</dbReference>
<dbReference type="RefSeq" id="XP_011518132.1">
    <molecule id="Q9Y5U2-1"/>
    <property type="nucleotide sequence ID" value="XM_011519830.4"/>
</dbReference>
<dbReference type="RefSeq" id="XP_047282172.1">
    <molecule id="Q9Y5U2-2"/>
    <property type="nucleotide sequence ID" value="XM_047426216.1"/>
</dbReference>
<dbReference type="RefSeq" id="XP_047282173.1">
    <molecule id="Q9Y5U2-2"/>
    <property type="nucleotide sequence ID" value="XM_047426217.1"/>
</dbReference>
<dbReference type="RefSeq" id="XP_047282174.1">
    <molecule id="Q9Y5U2-2"/>
    <property type="nucleotide sequence ID" value="XM_047426218.1"/>
</dbReference>
<dbReference type="PDB" id="7PX3">
    <property type="method" value="EM"/>
    <property type="resolution" value="3.05 A"/>
    <property type="chains" value="T=1-329"/>
</dbReference>
<dbReference type="PDB" id="8Q7Q">
    <property type="method" value="EM"/>
    <property type="resolution" value="3.20 A"/>
    <property type="chains" value="H=1-329"/>
</dbReference>
<dbReference type="PDB" id="8Q7V">
    <property type="method" value="EM"/>
    <property type="resolution" value="3.80 A"/>
    <property type="chains" value="H=1-329"/>
</dbReference>
<dbReference type="PDBsum" id="7PX3"/>
<dbReference type="PDBsum" id="8Q7Q"/>
<dbReference type="PDBsum" id="8Q7V"/>
<dbReference type="EMDB" id="EMD-13690"/>
<dbReference type="EMDB" id="EMD-18229"/>
<dbReference type="EMDB" id="EMD-18234"/>
<dbReference type="SMR" id="Q9Y5U2"/>
<dbReference type="BioGRID" id="115388">
    <property type="interactions" value="117"/>
</dbReference>
<dbReference type="FunCoup" id="Q9Y5U2">
    <property type="interactions" value="2007"/>
</dbReference>
<dbReference type="IntAct" id="Q9Y5U2">
    <property type="interactions" value="90"/>
</dbReference>
<dbReference type="MINT" id="Q9Y5U2"/>
<dbReference type="STRING" id="9606.ENSP00000331087"/>
<dbReference type="GlyGen" id="Q9Y5U2">
    <property type="glycosylation" value="1 site, 1 O-linked glycan (1 site)"/>
</dbReference>
<dbReference type="iPTMnet" id="Q9Y5U2"/>
<dbReference type="PhosphoSitePlus" id="Q9Y5U2"/>
<dbReference type="BioMuta" id="TSSC4"/>
<dbReference type="DMDM" id="296453006"/>
<dbReference type="jPOST" id="Q9Y5U2"/>
<dbReference type="MassIVE" id="Q9Y5U2"/>
<dbReference type="PaxDb" id="9606-ENSP00000331087"/>
<dbReference type="PeptideAtlas" id="Q9Y5U2"/>
<dbReference type="ProteomicsDB" id="86505">
    <molecule id="Q9Y5U2-1"/>
</dbReference>
<dbReference type="ProteomicsDB" id="86506">
    <molecule id="Q9Y5U2-2"/>
</dbReference>
<dbReference type="Pumba" id="Q9Y5U2"/>
<dbReference type="Antibodypedia" id="42107">
    <property type="antibodies" value="73 antibodies from 17 providers"/>
</dbReference>
<dbReference type="DNASU" id="10078"/>
<dbReference type="Ensembl" id="ENST00000333256.11">
    <molecule id="Q9Y5U2-1"/>
    <property type="protein sequence ID" value="ENSP00000331087.6"/>
    <property type="gene ID" value="ENSG00000184281.15"/>
</dbReference>
<dbReference type="Ensembl" id="ENST00000380996.9">
    <molecule id="Q9Y5U2-2"/>
    <property type="protein sequence ID" value="ENSP00000370384.5"/>
    <property type="gene ID" value="ENSG00000184281.15"/>
</dbReference>
<dbReference type="Ensembl" id="ENST00000451491.2">
    <molecule id="Q9Y5U2-1"/>
    <property type="protein sequence ID" value="ENSP00000411224.2"/>
    <property type="gene ID" value="ENSG00000184281.15"/>
</dbReference>
<dbReference type="GeneID" id="10078"/>
<dbReference type="KEGG" id="hsa:10078"/>
<dbReference type="MANE-Select" id="ENST00000333256.11">
    <property type="protein sequence ID" value="ENSP00000331087.6"/>
    <property type="RefSeq nucleotide sequence ID" value="NM_005706.4"/>
    <property type="RefSeq protein sequence ID" value="NP_005697.2"/>
</dbReference>
<dbReference type="UCSC" id="uc001lwi.4">
    <molecule id="Q9Y5U2-1"/>
    <property type="organism name" value="human"/>
</dbReference>
<dbReference type="AGR" id="HGNC:12386"/>
<dbReference type="CTD" id="10078"/>
<dbReference type="DisGeNET" id="10078"/>
<dbReference type="GeneCards" id="TSSC4"/>
<dbReference type="HGNC" id="HGNC:12386">
    <property type="gene designation" value="TSSC4"/>
</dbReference>
<dbReference type="HPA" id="ENSG00000184281">
    <property type="expression patterns" value="Low tissue specificity"/>
</dbReference>
<dbReference type="MIM" id="603852">
    <property type="type" value="gene"/>
</dbReference>
<dbReference type="neXtProt" id="NX_Q9Y5U2"/>
<dbReference type="OpenTargets" id="ENSG00000184281"/>
<dbReference type="PharmGKB" id="PA37054"/>
<dbReference type="VEuPathDB" id="HostDB:ENSG00000184281"/>
<dbReference type="eggNOG" id="ENOG502S07M">
    <property type="taxonomic scope" value="Eukaryota"/>
</dbReference>
<dbReference type="GeneTree" id="ENSGT00390000011846"/>
<dbReference type="HOGENOM" id="CLU_077569_0_0_1"/>
<dbReference type="InParanoid" id="Q9Y5U2"/>
<dbReference type="OMA" id="RMAAMEF"/>
<dbReference type="OrthoDB" id="1906282at2759"/>
<dbReference type="PAN-GO" id="Q9Y5U2">
    <property type="GO annotations" value="0 GO annotations based on evolutionary models"/>
</dbReference>
<dbReference type="PhylomeDB" id="Q9Y5U2"/>
<dbReference type="TreeFam" id="TF335741"/>
<dbReference type="PathwayCommons" id="Q9Y5U2"/>
<dbReference type="SignaLink" id="Q9Y5U2"/>
<dbReference type="BioGRID-ORCS" id="10078">
    <property type="hits" value="11 hits in 1151 CRISPR screens"/>
</dbReference>
<dbReference type="ChiTaRS" id="TSSC4">
    <property type="organism name" value="human"/>
</dbReference>
<dbReference type="GenomeRNAi" id="10078"/>
<dbReference type="Pharos" id="Q9Y5U2">
    <property type="development level" value="Tdark"/>
</dbReference>
<dbReference type="PRO" id="PR:Q9Y5U2"/>
<dbReference type="Proteomes" id="UP000005640">
    <property type="component" value="Chromosome 11"/>
</dbReference>
<dbReference type="RNAct" id="Q9Y5U2">
    <property type="molecule type" value="protein"/>
</dbReference>
<dbReference type="Bgee" id="ENSG00000184281">
    <property type="expression patterns" value="Expressed in left testis and 155 other cell types or tissues"/>
</dbReference>
<dbReference type="ExpressionAtlas" id="Q9Y5U2">
    <property type="expression patterns" value="baseline and differential"/>
</dbReference>
<dbReference type="GO" id="GO:0005737">
    <property type="term" value="C:cytoplasm"/>
    <property type="evidence" value="ECO:0000314"/>
    <property type="project" value="UniProtKB"/>
</dbReference>
<dbReference type="GO" id="GO:0005634">
    <property type="term" value="C:nucleus"/>
    <property type="evidence" value="ECO:0000314"/>
    <property type="project" value="UniProtKB"/>
</dbReference>
<dbReference type="GO" id="GO:0005681">
    <property type="term" value="C:spliceosomal complex"/>
    <property type="evidence" value="ECO:0007669"/>
    <property type="project" value="UniProtKB-KW"/>
</dbReference>
<dbReference type="GO" id="GO:0005682">
    <property type="term" value="C:U5 snRNP"/>
    <property type="evidence" value="ECO:0000314"/>
    <property type="project" value="UniProtKB"/>
</dbReference>
<dbReference type="GO" id="GO:0140313">
    <property type="term" value="F:molecular sequestering activity"/>
    <property type="evidence" value="ECO:0000314"/>
    <property type="project" value="UniProtKB"/>
</dbReference>
<dbReference type="GO" id="GO:0044877">
    <property type="term" value="F:protein-containing complex binding"/>
    <property type="evidence" value="ECO:0000314"/>
    <property type="project" value="UniProtKB"/>
</dbReference>
<dbReference type="GO" id="GO:0000387">
    <property type="term" value="P:spliceosomal snRNP assembly"/>
    <property type="evidence" value="ECO:0000314"/>
    <property type="project" value="UniProtKB"/>
</dbReference>
<dbReference type="GO" id="GO:0000244">
    <property type="term" value="P:spliceosomal tri-snRNP complex assembly"/>
    <property type="evidence" value="ECO:0000315"/>
    <property type="project" value="UniProtKB"/>
</dbReference>
<dbReference type="InterPro" id="IPR029338">
    <property type="entry name" value="TSSC4"/>
</dbReference>
<dbReference type="PANTHER" id="PTHR13445">
    <property type="entry name" value="TUMOR SUPPRESSING SUBTRANSFERABLE CANDIDATE 4 TSSC4"/>
    <property type="match status" value="1"/>
</dbReference>
<dbReference type="PANTHER" id="PTHR13445:SF3">
    <property type="entry name" value="U5 SMALL NUCLEAR RIBONUCLEOPROTEIN TSSC4"/>
    <property type="match status" value="1"/>
</dbReference>
<dbReference type="Pfam" id="PF15264">
    <property type="entry name" value="TSSC4"/>
    <property type="match status" value="1"/>
</dbReference>
<reference key="1">
    <citation type="journal article" date="1999" name="Hum. Mol. Genet.">
        <title>Two novel genes in the center of the 11p15 imprinted domain escape genomic imprinting.</title>
        <authorList>
            <person name="Lee M.P."/>
            <person name="Brandenburg S."/>
            <person name="Landes G.M."/>
            <person name="Adams M."/>
            <person name="Miller G."/>
            <person name="Feinberg A.P."/>
        </authorList>
    </citation>
    <scope>NUCLEOTIDE SEQUENCE [MRNA] (ISOFORM 1)</scope>
    <scope>TISSUE SPECIFICITY</scope>
    <scope>VARIANT PRO-274</scope>
</reference>
<reference key="2">
    <citation type="journal article" date="2006" name="Nature">
        <title>Human chromosome 11 DNA sequence and analysis including novel gene identification.</title>
        <authorList>
            <person name="Taylor T.D."/>
            <person name="Noguchi H."/>
            <person name="Totoki Y."/>
            <person name="Toyoda A."/>
            <person name="Kuroki Y."/>
            <person name="Dewar K."/>
            <person name="Lloyd C."/>
            <person name="Itoh T."/>
            <person name="Takeda T."/>
            <person name="Kim D.-W."/>
            <person name="She X."/>
            <person name="Barlow K.F."/>
            <person name="Bloom T."/>
            <person name="Bruford E."/>
            <person name="Chang J.L."/>
            <person name="Cuomo C.A."/>
            <person name="Eichler E."/>
            <person name="FitzGerald M.G."/>
            <person name="Jaffe D.B."/>
            <person name="LaButti K."/>
            <person name="Nicol R."/>
            <person name="Park H.-S."/>
            <person name="Seaman C."/>
            <person name="Sougnez C."/>
            <person name="Yang X."/>
            <person name="Zimmer A.R."/>
            <person name="Zody M.C."/>
            <person name="Birren B.W."/>
            <person name="Nusbaum C."/>
            <person name="Fujiyama A."/>
            <person name="Hattori M."/>
            <person name="Rogers J."/>
            <person name="Lander E.S."/>
            <person name="Sakaki Y."/>
        </authorList>
    </citation>
    <scope>NUCLEOTIDE SEQUENCE [LARGE SCALE GENOMIC DNA]</scope>
</reference>
<reference key="3">
    <citation type="journal article" date="2004" name="Genome Res.">
        <title>The status, quality, and expansion of the NIH full-length cDNA project: the Mammalian Gene Collection (MGC).</title>
        <authorList>
            <consortium name="The MGC Project Team"/>
        </authorList>
    </citation>
    <scope>NUCLEOTIDE SEQUENCE [LARGE SCALE MRNA] (ISOFORMS 1 AND 2)</scope>
    <scope>VARIANT PRO-274</scope>
    <source>
        <tissue>Brain</tissue>
        <tissue>Lymph</tissue>
    </source>
</reference>
<reference key="4">
    <citation type="journal article" date="2008" name="Proc. Natl. Acad. Sci. U.S.A.">
        <title>A quantitative atlas of mitotic phosphorylation.</title>
        <authorList>
            <person name="Dephoure N."/>
            <person name="Zhou C."/>
            <person name="Villen J."/>
            <person name="Beausoleil S.A."/>
            <person name="Bakalarski C.E."/>
            <person name="Elledge S.J."/>
            <person name="Gygi S.P."/>
        </authorList>
    </citation>
    <scope>PHOSPHORYLATION [LARGE SCALE ANALYSIS] AT SER-143 AND SER-146</scope>
    <scope>IDENTIFICATION BY MASS SPECTROMETRY [LARGE SCALE ANALYSIS]</scope>
    <source>
        <tissue>Cervix carcinoma</tissue>
    </source>
</reference>
<reference key="5">
    <citation type="journal article" date="2009" name="Anal. Chem.">
        <title>Lys-N and trypsin cover complementary parts of the phosphoproteome in a refined SCX-based approach.</title>
        <authorList>
            <person name="Gauci S."/>
            <person name="Helbig A.O."/>
            <person name="Slijper M."/>
            <person name="Krijgsveld J."/>
            <person name="Heck A.J."/>
            <person name="Mohammed S."/>
        </authorList>
    </citation>
    <scope>IDENTIFICATION BY MASS SPECTROMETRY [LARGE SCALE ANALYSIS]</scope>
</reference>
<reference key="6">
    <citation type="journal article" date="2009" name="Sci. Signal.">
        <title>Quantitative phosphoproteomic analysis of T cell receptor signaling reveals system-wide modulation of protein-protein interactions.</title>
        <authorList>
            <person name="Mayya V."/>
            <person name="Lundgren D.H."/>
            <person name="Hwang S.-I."/>
            <person name="Rezaul K."/>
            <person name="Wu L."/>
            <person name="Eng J.K."/>
            <person name="Rodionov V."/>
            <person name="Han D.K."/>
        </authorList>
    </citation>
    <scope>PHOSPHORYLATION [LARGE SCALE ANALYSIS] AT SER-321</scope>
    <scope>IDENTIFICATION BY MASS SPECTROMETRY [LARGE SCALE ANALYSIS]</scope>
    <source>
        <tissue>Leukemic T-cell</tissue>
    </source>
</reference>
<reference key="7">
    <citation type="journal article" date="2009" name="Science">
        <title>Lysine acetylation targets protein complexes and co-regulates major cellular functions.</title>
        <authorList>
            <person name="Choudhary C."/>
            <person name="Kumar C."/>
            <person name="Gnad F."/>
            <person name="Nielsen M.L."/>
            <person name="Rehman M."/>
            <person name="Walther T.C."/>
            <person name="Olsen J.V."/>
            <person name="Mann M."/>
        </authorList>
    </citation>
    <scope>ACETYLATION [LARGE SCALE ANALYSIS] AT LYS-217</scope>
    <scope>IDENTIFICATION BY MASS SPECTROMETRY [LARGE SCALE ANALYSIS]</scope>
</reference>
<reference key="8">
    <citation type="journal article" date="2010" name="Sci. Signal.">
        <title>Quantitative phosphoproteomics reveals widespread full phosphorylation site occupancy during mitosis.</title>
        <authorList>
            <person name="Olsen J.V."/>
            <person name="Vermeulen M."/>
            <person name="Santamaria A."/>
            <person name="Kumar C."/>
            <person name="Miller M.L."/>
            <person name="Jensen L.J."/>
            <person name="Gnad F."/>
            <person name="Cox J."/>
            <person name="Jensen T.S."/>
            <person name="Nigg E.A."/>
            <person name="Brunak S."/>
            <person name="Mann M."/>
        </authorList>
    </citation>
    <scope>PHOSPHORYLATION [LARGE SCALE ANALYSIS] AT SER-143 AND SER-146</scope>
    <scope>IDENTIFICATION BY MASS SPECTROMETRY [LARGE SCALE ANALYSIS]</scope>
    <source>
        <tissue>Cervix carcinoma</tissue>
    </source>
</reference>
<reference key="9">
    <citation type="journal article" date="2011" name="BMC Syst. Biol.">
        <title>Initial characterization of the human central proteome.</title>
        <authorList>
            <person name="Burkard T.R."/>
            <person name="Planyavsky M."/>
            <person name="Kaupe I."/>
            <person name="Breitwieser F.P."/>
            <person name="Buerckstuemmer T."/>
            <person name="Bennett K.L."/>
            <person name="Superti-Furga G."/>
            <person name="Colinge J."/>
        </authorList>
    </citation>
    <scope>IDENTIFICATION BY MASS SPECTROMETRY [LARGE SCALE ANALYSIS]</scope>
</reference>
<reference key="10">
    <citation type="journal article" date="2013" name="J. Proteome Res.">
        <title>Toward a comprehensive characterization of a human cancer cell phosphoproteome.</title>
        <authorList>
            <person name="Zhou H."/>
            <person name="Di Palma S."/>
            <person name="Preisinger C."/>
            <person name="Peng M."/>
            <person name="Polat A.N."/>
            <person name="Heck A.J."/>
            <person name="Mohammed S."/>
        </authorList>
    </citation>
    <scope>PHOSPHORYLATION [LARGE SCALE ANALYSIS] AT SER-86; SER-132 AND SER-146</scope>
    <scope>IDENTIFICATION BY MASS SPECTROMETRY [LARGE SCALE ANALYSIS]</scope>
    <source>
        <tissue>Cervix carcinoma</tissue>
        <tissue>Erythroleukemia</tissue>
    </source>
</reference>
<reference key="11">
    <citation type="journal article" date="2014" name="J. Proteomics">
        <title>An enzyme assisted RP-RPLC approach for in-depth analysis of human liver phosphoproteome.</title>
        <authorList>
            <person name="Bian Y."/>
            <person name="Song C."/>
            <person name="Cheng K."/>
            <person name="Dong M."/>
            <person name="Wang F."/>
            <person name="Huang J."/>
            <person name="Sun D."/>
            <person name="Wang L."/>
            <person name="Ye M."/>
            <person name="Zou H."/>
        </authorList>
    </citation>
    <scope>PHOSPHORYLATION [LARGE SCALE ANALYSIS] AT SER-265</scope>
    <scope>IDENTIFICATION BY MASS SPECTROMETRY [LARGE SCALE ANALYSIS]</scope>
    <source>
        <tissue>Liver</tissue>
    </source>
</reference>
<reference key="12">
    <citation type="journal article" date="2021" name="Nat. Commun.">
        <title>TSSC4 is a component of U5 snRNP that promotes tri-snRNP formation.</title>
        <authorList>
            <person name="Klimesova K."/>
            <person name="Vojackova J."/>
            <person name="Radivojevic N."/>
            <person name="Vandermoere F."/>
            <person name="Bertrand E."/>
            <person name="Verheggen C."/>
            <person name="Stanek D."/>
        </authorList>
    </citation>
    <scope>FUNCTION</scope>
    <scope>SUBUNIT</scope>
    <scope>SUBCELLULAR LOCATION</scope>
</reference>
<reference evidence="13" key="13">
    <citation type="journal article" date="2022" name="Nucleic Acids Res.">
        <title>The intrinsically disordered TSSC4 protein acts as a helicase inhibitor, placeholder and multi-interaction coordinator during snRNP assembly and recycling.</title>
        <authorList>
            <person name="Bergfort A."/>
            <person name="Hilal T."/>
            <person name="Kuropka B."/>
            <person name="Ilik I.A."/>
            <person name="Weber G."/>
            <person name="Aktas T."/>
            <person name="Freund C."/>
            <person name="Wahl M.C."/>
        </authorList>
    </citation>
    <scope>STRUCTURE BY ELECTRON MICROSCOPY (3.05 ANGSTROMS) IN COMPLEX WITH PRPF8 AND SNRNP200</scope>
    <scope>FUNCTION</scope>
    <scope>INTERACTION WITH SNRNP200 AND PRPF8</scope>
    <scope>REGION</scope>
    <scope>MUTAGENESIS OF TRP-162; TYR-165; PHE-201; ASN-202; PHE-315 AND ARG-316</scope>
</reference>
<name>TSSC4_HUMAN</name>
<sequence length="329" mass="34326">MAEAGTGEPSPSVEGEHGTEYDTLPSDTVSLSDSDSDLSLPGGAEVEALSPMGLPGEEDSGPDEPPSPPSGLLPATVQPFHLRGMSSTFSQRSRDIFDCLEGAARRAPSSVAHTSMSDNGGFKRPLAPSGRSPVEGLGRAHRSPASPRVPPVPDYVAHPERWTKYSLEDVTEVSEQSNQATALAFLGSQSLAAPTDCVSSFNQDPSSCGEGRVIFTKPVRGVEARHERKRVLGKVGEPGRGGLGNPATDRGEGPVELAHLAGPGSPEAEEWGSHHGGLQEVEALSGSVHSGSVPGLPPVETVGFHGSRKRSRDHFRNKSSSPEDPGAEV</sequence>
<evidence type="ECO:0000250" key="1">
    <source>
        <dbReference type="UniProtKB" id="Q9JHE7"/>
    </source>
</evidence>
<evidence type="ECO:0000256" key="2">
    <source>
        <dbReference type="SAM" id="MobiDB-lite"/>
    </source>
</evidence>
<evidence type="ECO:0000269" key="3">
    <source>
    </source>
</evidence>
<evidence type="ECO:0000269" key="4">
    <source>
    </source>
</evidence>
<evidence type="ECO:0000269" key="5">
    <source>
    </source>
</evidence>
<evidence type="ECO:0000269" key="6">
    <source>
    </source>
</evidence>
<evidence type="ECO:0000303" key="7">
    <source>
    </source>
</evidence>
<evidence type="ECO:0000303" key="8">
    <source>
    </source>
</evidence>
<evidence type="ECO:0000305" key="9"/>
<evidence type="ECO:0000305" key="10">
    <source>
    </source>
</evidence>
<evidence type="ECO:0000305" key="11">
    <source>
    </source>
</evidence>
<evidence type="ECO:0000312" key="12">
    <source>
        <dbReference type="HGNC" id="HGNC:12386"/>
    </source>
</evidence>
<evidence type="ECO:0007744" key="13">
    <source>
        <dbReference type="PDB" id="7PX3"/>
    </source>
</evidence>
<evidence type="ECO:0007744" key="14">
    <source>
    </source>
</evidence>
<evidence type="ECO:0007744" key="15">
    <source>
    </source>
</evidence>
<evidence type="ECO:0007744" key="16">
    <source>
    </source>
</evidence>
<evidence type="ECO:0007744" key="17">
    <source>
    </source>
</evidence>
<evidence type="ECO:0007744" key="18">
    <source>
    </source>
</evidence>
<evidence type="ECO:0007744" key="19">
    <source>
    </source>
</evidence>
<evidence type="ECO:0007829" key="20">
    <source>
        <dbReference type="PDB" id="7PX3"/>
    </source>
</evidence>
<evidence type="ECO:0007829" key="21">
    <source>
        <dbReference type="PDB" id="8Q7Q"/>
    </source>
</evidence>
<proteinExistence type="evidence at protein level"/>
<accession>Q9Y5U2</accession>
<accession>C9JS66</accession>
<accession>Q86VL2</accession>
<accession>Q9BRS6</accession>